<dbReference type="EC" id="2.7.7.8" evidence="1"/>
<dbReference type="EMBL" id="CP000683">
    <property type="protein sequence ID" value="ABV84829.1"/>
    <property type="molecule type" value="Genomic_DNA"/>
</dbReference>
<dbReference type="RefSeq" id="WP_012152804.1">
    <property type="nucleotide sequence ID" value="NC_009900.1"/>
</dbReference>
<dbReference type="SMR" id="A8F1P3"/>
<dbReference type="KEGG" id="rms:RMA_0669"/>
<dbReference type="HOGENOM" id="CLU_004217_2_2_5"/>
<dbReference type="Proteomes" id="UP000001311">
    <property type="component" value="Chromosome"/>
</dbReference>
<dbReference type="GO" id="GO:0005829">
    <property type="term" value="C:cytosol"/>
    <property type="evidence" value="ECO:0007669"/>
    <property type="project" value="TreeGrafter"/>
</dbReference>
<dbReference type="GO" id="GO:0000175">
    <property type="term" value="F:3'-5'-RNA exonuclease activity"/>
    <property type="evidence" value="ECO:0007669"/>
    <property type="project" value="TreeGrafter"/>
</dbReference>
<dbReference type="GO" id="GO:0000287">
    <property type="term" value="F:magnesium ion binding"/>
    <property type="evidence" value="ECO:0007669"/>
    <property type="project" value="UniProtKB-UniRule"/>
</dbReference>
<dbReference type="GO" id="GO:0004654">
    <property type="term" value="F:polyribonucleotide nucleotidyltransferase activity"/>
    <property type="evidence" value="ECO:0007669"/>
    <property type="project" value="UniProtKB-UniRule"/>
</dbReference>
<dbReference type="GO" id="GO:0003723">
    <property type="term" value="F:RNA binding"/>
    <property type="evidence" value="ECO:0007669"/>
    <property type="project" value="UniProtKB-UniRule"/>
</dbReference>
<dbReference type="GO" id="GO:0006402">
    <property type="term" value="P:mRNA catabolic process"/>
    <property type="evidence" value="ECO:0007669"/>
    <property type="project" value="UniProtKB-UniRule"/>
</dbReference>
<dbReference type="GO" id="GO:0006396">
    <property type="term" value="P:RNA processing"/>
    <property type="evidence" value="ECO:0007669"/>
    <property type="project" value="InterPro"/>
</dbReference>
<dbReference type="CDD" id="cd02393">
    <property type="entry name" value="KH-I_PNPase"/>
    <property type="match status" value="1"/>
</dbReference>
<dbReference type="CDD" id="cd11363">
    <property type="entry name" value="RNase_PH_PNPase_1"/>
    <property type="match status" value="1"/>
</dbReference>
<dbReference type="CDD" id="cd11364">
    <property type="entry name" value="RNase_PH_PNPase_2"/>
    <property type="match status" value="1"/>
</dbReference>
<dbReference type="FunFam" id="3.30.1370.10:FF:000001">
    <property type="entry name" value="Polyribonucleotide nucleotidyltransferase"/>
    <property type="match status" value="1"/>
</dbReference>
<dbReference type="FunFam" id="3.30.230.70:FF:000001">
    <property type="entry name" value="Polyribonucleotide nucleotidyltransferase"/>
    <property type="match status" value="1"/>
</dbReference>
<dbReference type="FunFam" id="3.30.230.70:FF:000002">
    <property type="entry name" value="Polyribonucleotide nucleotidyltransferase"/>
    <property type="match status" value="1"/>
</dbReference>
<dbReference type="FunFam" id="2.40.50.140:FF:000189">
    <property type="entry name" value="Polyribonucleotide nucleotidyltransferase, putative"/>
    <property type="match status" value="1"/>
</dbReference>
<dbReference type="Gene3D" id="3.30.230.70">
    <property type="entry name" value="GHMP Kinase, N-terminal domain"/>
    <property type="match status" value="2"/>
</dbReference>
<dbReference type="Gene3D" id="3.30.1370.10">
    <property type="entry name" value="K Homology domain, type 1"/>
    <property type="match status" value="1"/>
</dbReference>
<dbReference type="Gene3D" id="2.40.50.140">
    <property type="entry name" value="Nucleic acid-binding proteins"/>
    <property type="match status" value="1"/>
</dbReference>
<dbReference type="HAMAP" id="MF_01595">
    <property type="entry name" value="PNPase"/>
    <property type="match status" value="1"/>
</dbReference>
<dbReference type="InterPro" id="IPR001247">
    <property type="entry name" value="ExoRNase_PH_dom1"/>
</dbReference>
<dbReference type="InterPro" id="IPR015847">
    <property type="entry name" value="ExoRNase_PH_dom2"/>
</dbReference>
<dbReference type="InterPro" id="IPR036345">
    <property type="entry name" value="ExoRNase_PH_dom2_sf"/>
</dbReference>
<dbReference type="InterPro" id="IPR004087">
    <property type="entry name" value="KH_dom"/>
</dbReference>
<dbReference type="InterPro" id="IPR004088">
    <property type="entry name" value="KH_dom_type_1"/>
</dbReference>
<dbReference type="InterPro" id="IPR036612">
    <property type="entry name" value="KH_dom_type_1_sf"/>
</dbReference>
<dbReference type="InterPro" id="IPR012340">
    <property type="entry name" value="NA-bd_OB-fold"/>
</dbReference>
<dbReference type="InterPro" id="IPR012162">
    <property type="entry name" value="PNPase"/>
</dbReference>
<dbReference type="InterPro" id="IPR027408">
    <property type="entry name" value="PNPase/RNase_PH_dom_sf"/>
</dbReference>
<dbReference type="InterPro" id="IPR015848">
    <property type="entry name" value="PNPase_PH_RNA-bd_bac/org-type"/>
</dbReference>
<dbReference type="InterPro" id="IPR036456">
    <property type="entry name" value="PNPase_PH_RNA-bd_sf"/>
</dbReference>
<dbReference type="InterPro" id="IPR020568">
    <property type="entry name" value="Ribosomal_Su5_D2-typ_SF"/>
</dbReference>
<dbReference type="InterPro" id="IPR003029">
    <property type="entry name" value="S1_domain"/>
</dbReference>
<dbReference type="NCBIfam" id="TIGR03591">
    <property type="entry name" value="polynuc_phos"/>
    <property type="match status" value="1"/>
</dbReference>
<dbReference type="NCBIfam" id="NF008805">
    <property type="entry name" value="PRK11824.1"/>
    <property type="match status" value="1"/>
</dbReference>
<dbReference type="PANTHER" id="PTHR11252">
    <property type="entry name" value="POLYRIBONUCLEOTIDE NUCLEOTIDYLTRANSFERASE"/>
    <property type="match status" value="1"/>
</dbReference>
<dbReference type="PANTHER" id="PTHR11252:SF0">
    <property type="entry name" value="POLYRIBONUCLEOTIDE NUCLEOTIDYLTRANSFERASE 1, MITOCHONDRIAL"/>
    <property type="match status" value="1"/>
</dbReference>
<dbReference type="Pfam" id="PF00013">
    <property type="entry name" value="KH_1"/>
    <property type="match status" value="1"/>
</dbReference>
<dbReference type="Pfam" id="PF03726">
    <property type="entry name" value="PNPase"/>
    <property type="match status" value="1"/>
</dbReference>
<dbReference type="Pfam" id="PF01138">
    <property type="entry name" value="RNase_PH"/>
    <property type="match status" value="2"/>
</dbReference>
<dbReference type="Pfam" id="PF03725">
    <property type="entry name" value="RNase_PH_C"/>
    <property type="match status" value="1"/>
</dbReference>
<dbReference type="Pfam" id="PF00575">
    <property type="entry name" value="S1"/>
    <property type="match status" value="1"/>
</dbReference>
<dbReference type="PIRSF" id="PIRSF005499">
    <property type="entry name" value="PNPase"/>
    <property type="match status" value="1"/>
</dbReference>
<dbReference type="SMART" id="SM00322">
    <property type="entry name" value="KH"/>
    <property type="match status" value="1"/>
</dbReference>
<dbReference type="SMART" id="SM00316">
    <property type="entry name" value="S1"/>
    <property type="match status" value="1"/>
</dbReference>
<dbReference type="SUPFAM" id="SSF54791">
    <property type="entry name" value="Eukaryotic type KH-domain (KH-domain type I)"/>
    <property type="match status" value="1"/>
</dbReference>
<dbReference type="SUPFAM" id="SSF50249">
    <property type="entry name" value="Nucleic acid-binding proteins"/>
    <property type="match status" value="1"/>
</dbReference>
<dbReference type="SUPFAM" id="SSF46915">
    <property type="entry name" value="Polynucleotide phosphorylase/guanosine pentaphosphate synthase (PNPase/GPSI), domain 3"/>
    <property type="match status" value="1"/>
</dbReference>
<dbReference type="SUPFAM" id="SSF55666">
    <property type="entry name" value="Ribonuclease PH domain 2-like"/>
    <property type="match status" value="2"/>
</dbReference>
<dbReference type="SUPFAM" id="SSF54211">
    <property type="entry name" value="Ribosomal protein S5 domain 2-like"/>
    <property type="match status" value="2"/>
</dbReference>
<dbReference type="PROSITE" id="PS50084">
    <property type="entry name" value="KH_TYPE_1"/>
    <property type="match status" value="1"/>
</dbReference>
<dbReference type="PROSITE" id="PS50126">
    <property type="entry name" value="S1"/>
    <property type="match status" value="1"/>
</dbReference>
<reference key="1">
    <citation type="journal article" date="2007" name="Genome Res.">
        <title>Lateral gene transfer between obligate intracellular bacteria: evidence from the Rickettsia massiliae genome.</title>
        <authorList>
            <person name="Blanc G."/>
            <person name="Ogata H."/>
            <person name="Robert C."/>
            <person name="Audic S."/>
            <person name="Claverie J.-M."/>
            <person name="Raoult D."/>
        </authorList>
    </citation>
    <scope>NUCLEOTIDE SEQUENCE [LARGE SCALE GENOMIC DNA]</scope>
    <source>
        <strain>Mtu5</strain>
    </source>
</reference>
<proteinExistence type="inferred from homology"/>
<name>PNP_RICM5</name>
<keyword id="KW-0963">Cytoplasm</keyword>
<keyword id="KW-0460">Magnesium</keyword>
<keyword id="KW-0479">Metal-binding</keyword>
<keyword id="KW-0548">Nucleotidyltransferase</keyword>
<keyword id="KW-0694">RNA-binding</keyword>
<keyword id="KW-0808">Transferase</keyword>
<protein>
    <recommendedName>
        <fullName evidence="1">Polyribonucleotide nucleotidyltransferase</fullName>
        <ecNumber evidence="1">2.7.7.8</ecNumber>
    </recommendedName>
    <alternativeName>
        <fullName evidence="1">Polynucleotide phosphorylase</fullName>
        <shortName evidence="1">PNPase</shortName>
    </alternativeName>
</protein>
<comment type="function">
    <text evidence="1">Involved in mRNA degradation. Catalyzes the phosphorolysis of single-stranded polyribonucleotides processively in the 3'- to 5'-direction.</text>
</comment>
<comment type="catalytic activity">
    <reaction evidence="1">
        <text>RNA(n+1) + phosphate = RNA(n) + a ribonucleoside 5'-diphosphate</text>
        <dbReference type="Rhea" id="RHEA:22096"/>
        <dbReference type="Rhea" id="RHEA-COMP:14527"/>
        <dbReference type="Rhea" id="RHEA-COMP:17342"/>
        <dbReference type="ChEBI" id="CHEBI:43474"/>
        <dbReference type="ChEBI" id="CHEBI:57930"/>
        <dbReference type="ChEBI" id="CHEBI:140395"/>
        <dbReference type="EC" id="2.7.7.8"/>
    </reaction>
</comment>
<comment type="cofactor">
    <cofactor evidence="1">
        <name>Mg(2+)</name>
        <dbReference type="ChEBI" id="CHEBI:18420"/>
    </cofactor>
</comment>
<comment type="subcellular location">
    <subcellularLocation>
        <location evidence="1">Cytoplasm</location>
    </subcellularLocation>
</comment>
<comment type="similarity">
    <text evidence="1">Belongs to the polyribonucleotide nucleotidyltransferase family.</text>
</comment>
<evidence type="ECO:0000255" key="1">
    <source>
        <dbReference type="HAMAP-Rule" id="MF_01595"/>
    </source>
</evidence>
<evidence type="ECO:0000256" key="2">
    <source>
        <dbReference type="SAM" id="MobiDB-lite"/>
    </source>
</evidence>
<sequence length="745" mass="82018">MFNEITKSVTWNGKVLELSTGKIARQADGAVTVKMGNSVLLCTVVVANKAKEGIGFFPLTINYREMAYAAGKIPGGFFKREGKASDREVLVSRLIDRPIRPLFHPAFVNETHVTCSVLSYDPEIPVDILAIIGASAALSLSPAPYLEMVAASKVGLINGEFVLNPTLELLKTSQLDLVVAGTSDSVMMVESEAHLLSEEQMLEAVKFGFESFQPVIKIIKELAEEAKKPKLEMQDLYPASLKKEIEKLFVKEIEQAFAIKSKQERSTNLDLIPEKVLTHFVSDIENKKYSNYQIESALKAIESDILRNEILEKNRRIDGRSTTDIRQIACEIGLLPSAHGSALFTRGETQSLVSTTFGTSLDEQIVDSLEGEYKERFMLNYIFPPYSVNEAMPMKVPSRREVGHGKLAWRAINPILPNKVQFPYSIRVVAETTESNGSSSMATVCGSSLALMYAGVPIKAPVAGIAMGLVKEGKKFAVLSDILGDEDYFGDMDFKVAGTSEGITALQMDIKISGVDFKIMKVALEQARLGRLHILEQMNKVISKPNNELSKNAPSTTTIKIDKDKIRDIIGPGGKVIKEICEISGAKIDISDDGTVSIYASDRDKLKVALDKIKAIAVEPEIGEIFNGTVMKVLDSGAFINYLGNKDGFVHISEISEERIETVSSVLKQGDIVKVKLIGFDNKGKAKLTIKNADKDKSSNNTKPKTNAKDNSEPEQRRDSSKKRAWNEDNNAETAEVITERKYFN</sequence>
<feature type="chain" id="PRO_0000329818" description="Polyribonucleotide nucleotidyltransferase">
    <location>
        <begin position="1"/>
        <end position="745"/>
    </location>
</feature>
<feature type="domain" description="KH" evidence="1">
    <location>
        <begin position="554"/>
        <end position="613"/>
    </location>
</feature>
<feature type="domain" description="S1 motif" evidence="1">
    <location>
        <begin position="623"/>
        <end position="691"/>
    </location>
</feature>
<feature type="region of interest" description="Disordered" evidence="2">
    <location>
        <begin position="691"/>
        <end position="745"/>
    </location>
</feature>
<feature type="compositionally biased region" description="Basic and acidic residues" evidence="2">
    <location>
        <begin position="707"/>
        <end position="719"/>
    </location>
</feature>
<feature type="binding site" evidence="1">
    <location>
        <position position="487"/>
    </location>
    <ligand>
        <name>Mg(2+)</name>
        <dbReference type="ChEBI" id="CHEBI:18420"/>
    </ligand>
</feature>
<feature type="binding site" evidence="1">
    <location>
        <position position="493"/>
    </location>
    <ligand>
        <name>Mg(2+)</name>
        <dbReference type="ChEBI" id="CHEBI:18420"/>
    </ligand>
</feature>
<gene>
    <name evidence="1" type="primary">pnp</name>
    <name type="ordered locus">RMA_0669</name>
</gene>
<accession>A8F1P3</accession>
<organism>
    <name type="scientific">Rickettsia massiliae (strain Mtu5)</name>
    <dbReference type="NCBI Taxonomy" id="416276"/>
    <lineage>
        <taxon>Bacteria</taxon>
        <taxon>Pseudomonadati</taxon>
        <taxon>Pseudomonadota</taxon>
        <taxon>Alphaproteobacteria</taxon>
        <taxon>Rickettsiales</taxon>
        <taxon>Rickettsiaceae</taxon>
        <taxon>Rickettsieae</taxon>
        <taxon>Rickettsia</taxon>
        <taxon>spotted fever group</taxon>
    </lineage>
</organism>